<keyword id="KW-1003">Cell membrane</keyword>
<keyword id="KW-0472">Membrane</keyword>
<keyword id="KW-0812">Transmembrane</keyword>
<keyword id="KW-1133">Transmembrane helix</keyword>
<organism>
    <name type="scientific">Histophilus somni (strain 2336)</name>
    <name type="common">Haemophilus somnus</name>
    <dbReference type="NCBI Taxonomy" id="228400"/>
    <lineage>
        <taxon>Bacteria</taxon>
        <taxon>Pseudomonadati</taxon>
        <taxon>Pseudomonadota</taxon>
        <taxon>Gammaproteobacteria</taxon>
        <taxon>Pasteurellales</taxon>
        <taxon>Pasteurellaceae</taxon>
        <taxon>Histophilus</taxon>
    </lineage>
</organism>
<dbReference type="EMBL" id="CP000947">
    <property type="protein sequence ID" value="ACA31220.1"/>
    <property type="molecule type" value="Genomic_DNA"/>
</dbReference>
<dbReference type="RefSeq" id="WP_012340612.1">
    <property type="nucleotide sequence ID" value="NC_010519.1"/>
</dbReference>
<dbReference type="STRING" id="228400.HSM_1471"/>
<dbReference type="GeneID" id="31487769"/>
<dbReference type="KEGG" id="hsm:HSM_1471"/>
<dbReference type="HOGENOM" id="CLU_125889_0_0_6"/>
<dbReference type="GO" id="GO:0005886">
    <property type="term" value="C:plasma membrane"/>
    <property type="evidence" value="ECO:0007669"/>
    <property type="project" value="UniProtKB-SubCell"/>
</dbReference>
<dbReference type="HAMAP" id="MF_01874">
    <property type="entry name" value="UPF0756"/>
    <property type="match status" value="1"/>
</dbReference>
<dbReference type="InterPro" id="IPR007382">
    <property type="entry name" value="UPF0756_TM"/>
</dbReference>
<dbReference type="PANTHER" id="PTHR38452">
    <property type="entry name" value="UPF0756 MEMBRANE PROTEIN YEAL"/>
    <property type="match status" value="1"/>
</dbReference>
<dbReference type="PANTHER" id="PTHR38452:SF1">
    <property type="entry name" value="UPF0756 MEMBRANE PROTEIN YEAL"/>
    <property type="match status" value="1"/>
</dbReference>
<dbReference type="Pfam" id="PF04284">
    <property type="entry name" value="DUF441"/>
    <property type="match status" value="1"/>
</dbReference>
<accession>B0UUJ2</accession>
<feature type="chain" id="PRO_5000311089" description="UPF0756 membrane protein HSM_1471">
    <location>
        <begin position="1"/>
        <end position="151"/>
    </location>
</feature>
<feature type="transmembrane region" description="Helical" evidence="1">
    <location>
        <begin position="1"/>
        <end position="21"/>
    </location>
</feature>
<feature type="transmembrane region" description="Helical" evidence="1">
    <location>
        <begin position="52"/>
        <end position="72"/>
    </location>
</feature>
<feature type="transmembrane region" description="Helical" evidence="1">
    <location>
        <begin position="81"/>
        <end position="101"/>
    </location>
</feature>
<feature type="transmembrane region" description="Helical" evidence="1">
    <location>
        <begin position="123"/>
        <end position="143"/>
    </location>
</feature>
<gene>
    <name type="ordered locus">HSM_1471</name>
</gene>
<proteinExistence type="inferred from homology"/>
<comment type="subcellular location">
    <subcellularLocation>
        <location evidence="1">Cell membrane</location>
        <topology evidence="1">Multi-pass membrane protein</topology>
    </subcellularLocation>
</comment>
<comment type="similarity">
    <text evidence="1">Belongs to the UPF0756 family.</text>
</comment>
<protein>
    <recommendedName>
        <fullName evidence="1">UPF0756 membrane protein HSM_1471</fullName>
    </recommendedName>
</protein>
<evidence type="ECO:0000255" key="1">
    <source>
        <dbReference type="HAMAP-Rule" id="MF_01874"/>
    </source>
</evidence>
<reference key="1">
    <citation type="submission" date="2008-02" db="EMBL/GenBank/DDBJ databases">
        <title>Complete sequence of Haemophilus somnus 2336.</title>
        <authorList>
            <consortium name="US DOE Joint Genome Institute"/>
            <person name="Siddaramappa S."/>
            <person name="Duncan A.J."/>
            <person name="Challacombe J.F."/>
            <person name="Rainey D."/>
            <person name="Gillaspy A.F."/>
            <person name="Carson M."/>
            <person name="Gipson J."/>
            <person name="Gipson M."/>
            <person name="Bruce D."/>
            <person name="Detter J.C."/>
            <person name="Han C.S."/>
            <person name="Land M."/>
            <person name="Tapia R."/>
            <person name="Thompson L.S."/>
            <person name="Orvis J."/>
            <person name="Zaitshik J."/>
            <person name="Barnes G."/>
            <person name="Brettin T.S."/>
            <person name="Dyer D.W."/>
            <person name="Inzana T.J."/>
        </authorList>
    </citation>
    <scope>NUCLEOTIDE SEQUENCE [LARGE SCALE GENOMIC DNA]</scope>
    <source>
        <strain>2336</strain>
    </source>
</reference>
<sequence length="151" mass="15818">MSLQFNSIALLLVSLILLGVLGNNSSITISATILLLMQQTFLAKYIPFMERYGVNIGIIVLTIGVLSPIVSGKVQLPNWTALIHWKMFLAMAVGVLVAWFGGRGVNLMGTQPSLLTGLLVGTILGVAFLGGVPVGPLIAAGILSLFIGKTG</sequence>
<name>Y1471_HISS2</name>